<organism>
    <name type="scientific">Lupinus angustifolius</name>
    <name type="common">Narrow-leaved blue lupine</name>
    <dbReference type="NCBI Taxonomy" id="3871"/>
    <lineage>
        <taxon>Eukaryota</taxon>
        <taxon>Viridiplantae</taxon>
        <taxon>Streptophyta</taxon>
        <taxon>Embryophyta</taxon>
        <taxon>Tracheophyta</taxon>
        <taxon>Spermatophyta</taxon>
        <taxon>Magnoliopsida</taxon>
        <taxon>eudicotyledons</taxon>
        <taxon>Gunneridae</taxon>
        <taxon>Pentapetalae</taxon>
        <taxon>rosids</taxon>
        <taxon>fabids</taxon>
        <taxon>Fabales</taxon>
        <taxon>Fabaceae</taxon>
        <taxon>Papilionoideae</taxon>
        <taxon>50 kb inversion clade</taxon>
        <taxon>genistoids sensu lato</taxon>
        <taxon>core genistoids</taxon>
        <taxon>Genisteae</taxon>
        <taxon>Lupinus</taxon>
    </lineage>
</organism>
<sequence>MSLLSDLINLNLSDTTEKIIAEYIWVGGSGVDLRSKARTLSGPVNDPSKLPKWNYDGSSTGQAPGKDSEVILWPQAIFKDPFRRGNNILVICDTYTPSGKPIPTNKRHAAAKIFSHPDVAAEEPWFGIEQEYTLLQKDIHWPIGMALGGFPGPQGPYYCGTGAEKAFGRDIVDSHYKACLYAGINISGINAEVMPGQWEFQVGPSIGISAGDELWVARYILERITEIAGVVLSLDPKPIPGDWNGAGAHTNYSTKSMRNDGGYEVIKQAIEKLEKRHNEHIAAYGEGNERRLTGRHETADISTFSWGVANRGASI</sequence>
<dbReference type="EC" id="6.3.1.2"/>
<dbReference type="EMBL" id="X15578">
    <property type="protein sequence ID" value="CAA33605.1"/>
    <property type="molecule type" value="mRNA"/>
</dbReference>
<dbReference type="PIR" id="S07462">
    <property type="entry name" value="AJYLNB"/>
</dbReference>
<dbReference type="SMR" id="P14636"/>
<dbReference type="GO" id="GO:0005737">
    <property type="term" value="C:cytoplasm"/>
    <property type="evidence" value="ECO:0007669"/>
    <property type="project" value="UniProtKB-SubCell"/>
</dbReference>
<dbReference type="GO" id="GO:0005524">
    <property type="term" value="F:ATP binding"/>
    <property type="evidence" value="ECO:0007669"/>
    <property type="project" value="UniProtKB-KW"/>
</dbReference>
<dbReference type="GO" id="GO:0004356">
    <property type="term" value="F:glutamine synthetase activity"/>
    <property type="evidence" value="ECO:0007669"/>
    <property type="project" value="UniProtKB-EC"/>
</dbReference>
<dbReference type="GO" id="GO:0006542">
    <property type="term" value="P:glutamine biosynthetic process"/>
    <property type="evidence" value="ECO:0007669"/>
    <property type="project" value="InterPro"/>
</dbReference>
<dbReference type="FunFam" id="3.30.590.10:FF:000004">
    <property type="entry name" value="Glutamine synthetase"/>
    <property type="match status" value="1"/>
</dbReference>
<dbReference type="FunFam" id="3.10.20.70:FF:000003">
    <property type="entry name" value="Glutamine synthetase, chloroplastic"/>
    <property type="match status" value="1"/>
</dbReference>
<dbReference type="Gene3D" id="3.10.20.70">
    <property type="entry name" value="Glutamine synthetase, N-terminal domain"/>
    <property type="match status" value="1"/>
</dbReference>
<dbReference type="Gene3D" id="3.30.590.10">
    <property type="entry name" value="Glutamine synthetase/guanido kinase, catalytic domain"/>
    <property type="match status" value="1"/>
</dbReference>
<dbReference type="InterPro" id="IPR008147">
    <property type="entry name" value="Gln_synt_N"/>
</dbReference>
<dbReference type="InterPro" id="IPR036651">
    <property type="entry name" value="Gln_synt_N_sf"/>
</dbReference>
<dbReference type="InterPro" id="IPR014746">
    <property type="entry name" value="Gln_synth/guanido_kin_cat_dom"/>
</dbReference>
<dbReference type="InterPro" id="IPR008146">
    <property type="entry name" value="Gln_synth_cat_dom"/>
</dbReference>
<dbReference type="InterPro" id="IPR027303">
    <property type="entry name" value="Gln_synth_gly_rich_site"/>
</dbReference>
<dbReference type="InterPro" id="IPR027302">
    <property type="entry name" value="Gln_synth_N_conserv_site"/>
</dbReference>
<dbReference type="InterPro" id="IPR050292">
    <property type="entry name" value="Glutamine_Synthetase"/>
</dbReference>
<dbReference type="PANTHER" id="PTHR20852">
    <property type="entry name" value="GLUTAMINE SYNTHETASE"/>
    <property type="match status" value="1"/>
</dbReference>
<dbReference type="PANTHER" id="PTHR20852:SF93">
    <property type="entry name" value="GLUTAMINE SYNTHETASE CYTOSOLIC ISOZYME 1-1"/>
    <property type="match status" value="1"/>
</dbReference>
<dbReference type="Pfam" id="PF00120">
    <property type="entry name" value="Gln-synt_C"/>
    <property type="match status" value="1"/>
</dbReference>
<dbReference type="SMART" id="SM01230">
    <property type="entry name" value="Gln-synt_C"/>
    <property type="match status" value="1"/>
</dbReference>
<dbReference type="SUPFAM" id="SSF54368">
    <property type="entry name" value="Glutamine synthetase, N-terminal domain"/>
    <property type="match status" value="1"/>
</dbReference>
<dbReference type="SUPFAM" id="SSF55931">
    <property type="entry name" value="Glutamine synthetase/guanido kinase"/>
    <property type="match status" value="1"/>
</dbReference>
<dbReference type="PROSITE" id="PS00180">
    <property type="entry name" value="GLNA_1"/>
    <property type="match status" value="1"/>
</dbReference>
<dbReference type="PROSITE" id="PS00181">
    <property type="entry name" value="GLNA_ATP"/>
    <property type="match status" value="1"/>
</dbReference>
<dbReference type="PROSITE" id="PS51986">
    <property type="entry name" value="GS_BETA_GRASP"/>
    <property type="match status" value="1"/>
</dbReference>
<dbReference type="PROSITE" id="PS51987">
    <property type="entry name" value="GS_CATALYTIC"/>
    <property type="match status" value="1"/>
</dbReference>
<keyword id="KW-0067">ATP-binding</keyword>
<keyword id="KW-0963">Cytoplasm</keyword>
<keyword id="KW-0436">Ligase</keyword>
<keyword id="KW-0535">Nitrogen fixation</keyword>
<keyword id="KW-0547">Nucleotide-binding</keyword>
<proteinExistence type="evidence at transcript level"/>
<accession>P14636</accession>
<feature type="chain" id="PRO_0000153176" description="Glutamine synthetase nodule isozyme">
    <location>
        <begin position="1"/>
        <end position="315" status="greater than"/>
    </location>
</feature>
<feature type="domain" description="GS beta-grasp" evidence="1">
    <location>
        <begin position="19"/>
        <end position="99"/>
    </location>
</feature>
<feature type="domain" description="GS catalytic" evidence="2">
    <location>
        <begin position="106"/>
        <end position="315"/>
    </location>
</feature>
<feature type="non-terminal residue">
    <location>
        <position position="315"/>
    </location>
</feature>
<evidence type="ECO:0000255" key="1">
    <source>
        <dbReference type="PROSITE-ProRule" id="PRU01330"/>
    </source>
</evidence>
<evidence type="ECO:0000255" key="2">
    <source>
        <dbReference type="PROSITE-ProRule" id="PRU01331"/>
    </source>
</evidence>
<evidence type="ECO:0000305" key="3"/>
<reference key="1">
    <citation type="journal article" date="1989" name="Plant Mol. Biol.">
        <title>The isolation and characterization of a cDNA clone encoding Lupinus angustifolius root nodule glutamine synthetase.</title>
        <authorList>
            <person name="Grant M.R."/>
            <person name="Carne A."/>
            <person name="Hill D.F."/>
            <person name="Farnden K.J.F."/>
        </authorList>
    </citation>
    <scope>NUCLEOTIDE SEQUENCE [MRNA]</scope>
    <source>
        <strain>cv. Uniharvest</strain>
        <tissue>Root nodule</tissue>
    </source>
</reference>
<comment type="catalytic activity">
    <reaction>
        <text>L-glutamate + NH4(+) + ATP = L-glutamine + ADP + phosphate + H(+)</text>
        <dbReference type="Rhea" id="RHEA:16169"/>
        <dbReference type="ChEBI" id="CHEBI:15378"/>
        <dbReference type="ChEBI" id="CHEBI:28938"/>
        <dbReference type="ChEBI" id="CHEBI:29985"/>
        <dbReference type="ChEBI" id="CHEBI:30616"/>
        <dbReference type="ChEBI" id="CHEBI:43474"/>
        <dbReference type="ChEBI" id="CHEBI:58359"/>
        <dbReference type="ChEBI" id="CHEBI:456216"/>
        <dbReference type="EC" id="6.3.1.2"/>
    </reaction>
</comment>
<comment type="subunit">
    <text>Homooctamer.</text>
</comment>
<comment type="subcellular location">
    <subcellularLocation>
        <location>Cytoplasm</location>
    </subcellularLocation>
</comment>
<comment type="similarity">
    <text evidence="3">Belongs to the glutamine synthetase family.</text>
</comment>
<protein>
    <recommendedName>
        <fullName>Glutamine synthetase nodule isozyme</fullName>
        <ecNumber>6.3.1.2</ecNumber>
    </recommendedName>
    <alternativeName>
        <fullName>Glutamate--ammonia ligase</fullName>
    </alternativeName>
</protein>
<name>GLNA3_LUPAN</name>